<protein>
    <recommendedName>
        <fullName>Cytochrome c</fullName>
    </recommendedName>
</protein>
<name>CYC_EQUAS</name>
<gene>
    <name type="primary">CYCS</name>
    <name type="synonym">CYC</name>
</gene>
<dbReference type="PIR" id="A00006">
    <property type="entry name" value="CCHOD"/>
</dbReference>
<dbReference type="RefSeq" id="XP_014694486.1">
    <property type="nucleotide sequence ID" value="XM_014839000.1"/>
</dbReference>
<dbReference type="RefSeq" id="XP_014694487.1">
    <property type="nucleotide sequence ID" value="XM_014839001.3"/>
</dbReference>
<dbReference type="BMRB" id="P68097"/>
<dbReference type="SMR" id="P68097"/>
<dbReference type="PeptideAtlas" id="P68097"/>
<dbReference type="Ensembl" id="ENSEAST00005051658.1">
    <property type="protein sequence ID" value="ENSEASP00005062528.1"/>
    <property type="gene ID" value="ENSEASG00005038171.1"/>
</dbReference>
<dbReference type="GeneID" id="106829744"/>
<dbReference type="KEGG" id="eai:106829744"/>
<dbReference type="CTD" id="54205"/>
<dbReference type="GeneTree" id="ENSGT00940000157883"/>
<dbReference type="Proteomes" id="UP000694387">
    <property type="component" value="Chromosome 1"/>
</dbReference>
<dbReference type="GO" id="GO:0005758">
    <property type="term" value="C:mitochondrial intermembrane space"/>
    <property type="evidence" value="ECO:0007669"/>
    <property type="project" value="UniProtKB-SubCell"/>
</dbReference>
<dbReference type="GO" id="GO:0009055">
    <property type="term" value="F:electron transfer activity"/>
    <property type="evidence" value="ECO:0007669"/>
    <property type="project" value="InterPro"/>
</dbReference>
<dbReference type="GO" id="GO:0020037">
    <property type="term" value="F:heme binding"/>
    <property type="evidence" value="ECO:0007669"/>
    <property type="project" value="InterPro"/>
</dbReference>
<dbReference type="GO" id="GO:0046872">
    <property type="term" value="F:metal ion binding"/>
    <property type="evidence" value="ECO:0007669"/>
    <property type="project" value="UniProtKB-KW"/>
</dbReference>
<dbReference type="GO" id="GO:0006915">
    <property type="term" value="P:apoptotic process"/>
    <property type="evidence" value="ECO:0007669"/>
    <property type="project" value="UniProtKB-KW"/>
</dbReference>
<dbReference type="FunFam" id="1.10.760.10:FF:000008">
    <property type="entry name" value="Cytochrome c"/>
    <property type="match status" value="1"/>
</dbReference>
<dbReference type="Gene3D" id="1.10.760.10">
    <property type="entry name" value="Cytochrome c-like domain"/>
    <property type="match status" value="1"/>
</dbReference>
<dbReference type="InterPro" id="IPR009056">
    <property type="entry name" value="Cyt_c-like_dom"/>
</dbReference>
<dbReference type="InterPro" id="IPR036909">
    <property type="entry name" value="Cyt_c-like_dom_sf"/>
</dbReference>
<dbReference type="InterPro" id="IPR002327">
    <property type="entry name" value="Cyt_c_1A/1B"/>
</dbReference>
<dbReference type="PANTHER" id="PTHR11961">
    <property type="entry name" value="CYTOCHROME C"/>
    <property type="match status" value="1"/>
</dbReference>
<dbReference type="Pfam" id="PF00034">
    <property type="entry name" value="Cytochrom_C"/>
    <property type="match status" value="1"/>
</dbReference>
<dbReference type="PRINTS" id="PR00604">
    <property type="entry name" value="CYTCHRMECIAB"/>
</dbReference>
<dbReference type="SUPFAM" id="SSF46626">
    <property type="entry name" value="Cytochrome c"/>
    <property type="match status" value="1"/>
</dbReference>
<dbReference type="PROSITE" id="PS51007">
    <property type="entry name" value="CYTC"/>
    <property type="match status" value="1"/>
</dbReference>
<reference key="1">
    <citation type="journal article" date="1977" name="J. Biol. Chem.">
        <title>Transmission of the cytochrome c structural gene in horse-donkey crosses.</title>
        <authorList>
            <person name="Walasek O.F."/>
            <person name="Margoliash E."/>
        </authorList>
    </citation>
    <scope>PRELIMINARY PROTEIN SEQUENCE OF 2-105</scope>
    <scope>PROTEIN SEQUENCE OF 48-49</scope>
</reference>
<evidence type="ECO:0000250" key="1"/>
<evidence type="ECO:0000250" key="2">
    <source>
        <dbReference type="UniProtKB" id="P00003"/>
    </source>
</evidence>
<evidence type="ECO:0000250" key="3">
    <source>
        <dbReference type="UniProtKB" id="P62894"/>
    </source>
</evidence>
<evidence type="ECO:0000250" key="4">
    <source>
        <dbReference type="UniProtKB" id="P62897"/>
    </source>
</evidence>
<evidence type="ECO:0000305" key="5"/>
<sequence length="105" mass="11819">MGDVEKGKKIFVQKCAQCHTVEKGGKHKTGPNLHGLFGRKTGQAPGFSYTDANKNKGITWKEETLMEYLENPKKYIPGTKMIFAGIKKKTEREDLIAYLKKATNE</sequence>
<accession>P68097</accession>
<accession>P00005</accession>
<feature type="initiator methionine" description="Removed" evidence="2 3">
    <location>
        <position position="1"/>
    </location>
</feature>
<feature type="chain" id="PRO_0000108212" description="Cytochrome c">
    <location>
        <begin position="2"/>
        <end position="105"/>
    </location>
</feature>
<feature type="binding site" description="covalent">
    <location>
        <position position="15"/>
    </location>
    <ligand>
        <name>heme c</name>
        <dbReference type="ChEBI" id="CHEBI:61717"/>
    </ligand>
</feature>
<feature type="binding site" description="covalent">
    <location>
        <position position="18"/>
    </location>
    <ligand>
        <name>heme c</name>
        <dbReference type="ChEBI" id="CHEBI:61717"/>
    </ligand>
</feature>
<feature type="binding site" description="axial binding residue">
    <location>
        <position position="19"/>
    </location>
    <ligand>
        <name>heme c</name>
        <dbReference type="ChEBI" id="CHEBI:61717"/>
    </ligand>
    <ligandPart>
        <name>Fe</name>
        <dbReference type="ChEBI" id="CHEBI:18248"/>
    </ligandPart>
</feature>
<feature type="binding site" description="axial binding residue">
    <location>
        <position position="81"/>
    </location>
    <ligand>
        <name>heme c</name>
        <dbReference type="ChEBI" id="CHEBI:61717"/>
    </ligand>
    <ligandPart>
        <name>Fe</name>
        <dbReference type="ChEBI" id="CHEBI:18248"/>
    </ligandPart>
</feature>
<feature type="modified residue" description="N-acetylglycine" evidence="3">
    <location>
        <position position="2"/>
    </location>
</feature>
<feature type="modified residue" description="Phosphotyrosine" evidence="3">
    <location>
        <position position="49"/>
    </location>
</feature>
<feature type="modified residue" description="N6-succinyllysine" evidence="4">
    <location>
        <position position="56"/>
    </location>
</feature>
<feature type="modified residue" description="N6-acetyllysine; alternate" evidence="4">
    <location>
        <position position="73"/>
    </location>
</feature>
<feature type="modified residue" description="N6-succinyllysine; alternate" evidence="4">
    <location>
        <position position="73"/>
    </location>
</feature>
<feature type="modified residue" description="Phosphotyrosine" evidence="3">
    <location>
        <position position="98"/>
    </location>
</feature>
<feature type="modified residue" description="N6-acetyllysine" evidence="4">
    <location>
        <position position="100"/>
    </location>
</feature>
<organism>
    <name type="scientific">Equus asinus</name>
    <name type="common">Donkey</name>
    <name type="synonym">Equus africanus asinus</name>
    <dbReference type="NCBI Taxonomy" id="9793"/>
    <lineage>
        <taxon>Eukaryota</taxon>
        <taxon>Metazoa</taxon>
        <taxon>Chordata</taxon>
        <taxon>Craniata</taxon>
        <taxon>Vertebrata</taxon>
        <taxon>Euteleostomi</taxon>
        <taxon>Mammalia</taxon>
        <taxon>Eutheria</taxon>
        <taxon>Laurasiatheria</taxon>
        <taxon>Perissodactyla</taxon>
        <taxon>Equidae</taxon>
        <taxon>Equus</taxon>
    </lineage>
</organism>
<keyword id="KW-0007">Acetylation</keyword>
<keyword id="KW-0053">Apoptosis</keyword>
<keyword id="KW-0903">Direct protein sequencing</keyword>
<keyword id="KW-0249">Electron transport</keyword>
<keyword id="KW-0349">Heme</keyword>
<keyword id="KW-0408">Iron</keyword>
<keyword id="KW-0479">Metal-binding</keyword>
<keyword id="KW-0496">Mitochondrion</keyword>
<keyword id="KW-0597">Phosphoprotein</keyword>
<keyword id="KW-1185">Reference proteome</keyword>
<keyword id="KW-0679">Respiratory chain</keyword>
<keyword id="KW-0813">Transport</keyword>
<comment type="function">
    <text>Electron carrier protein. The oxidized form of the cytochrome c heme group can accept an electron from the heme group of the cytochrome c1 subunit of cytochrome reductase. Cytochrome c then transfers this electron to the cytochrome oxidase complex, the final protein carrier in the mitochondrial electron-transport chain.</text>
</comment>
<comment type="function">
    <text evidence="1">Plays a role in apoptosis. Suppression of the anti-apoptotic members or activation of the pro-apoptotic members of the Bcl-2 family leads to altered mitochondrial membrane permeability resulting in release of cytochrome c into the cytosol. Binding of cytochrome c to Apaf-1 triggers the activation of caspase-9, which then accelerates apoptosis by activating other caspases (By similarity).</text>
</comment>
<comment type="subcellular location">
    <subcellularLocation>
        <location>Mitochondrion intermembrane space</location>
    </subcellularLocation>
    <text>Loosely associated with the inner membrane.</text>
</comment>
<comment type="PTM">
    <text>Binds 1 heme c group covalently per subunit.</text>
</comment>
<comment type="PTM">
    <text evidence="1">Phosphorylation at Tyr-49 and Tyr-98 both reduce by half the turnover in the reaction with cytochrome c oxidase, down-regulating mitochondrial respiration.</text>
</comment>
<comment type="miscellaneous">
    <text>Mules and hinnies are heterozygous, having equal amount of horse and donkey cytochromes c.</text>
</comment>
<comment type="similarity">
    <text evidence="5">Belongs to the cytochrome c family.</text>
</comment>
<comment type="online information" name="Protein Spotlight">
    <link uri="https://www.proteinspotlight.org/back_issues/076"/>
    <text>Life shuttle - Issue 76 of November 2006</text>
</comment>
<proteinExistence type="evidence at protein level"/>